<comment type="function">
    <text evidence="1">Involved in DNA recombination.</text>
</comment>
<comment type="similarity">
    <text evidence="3">Belongs to the RmuC family.</text>
</comment>
<reference key="1">
    <citation type="journal article" date="2000" name="Nature">
        <title>The genome sequence of the plant pathogen Xylella fastidiosa.</title>
        <authorList>
            <person name="Simpson A.J.G."/>
            <person name="Reinach F.C."/>
            <person name="Arruda P."/>
            <person name="Abreu F.A."/>
            <person name="Acencio M."/>
            <person name="Alvarenga R."/>
            <person name="Alves L.M.C."/>
            <person name="Araya J.E."/>
            <person name="Baia G.S."/>
            <person name="Baptista C.S."/>
            <person name="Barros M.H."/>
            <person name="Bonaccorsi E.D."/>
            <person name="Bordin S."/>
            <person name="Bove J.M."/>
            <person name="Briones M.R.S."/>
            <person name="Bueno M.R.P."/>
            <person name="Camargo A.A."/>
            <person name="Camargo L.E.A."/>
            <person name="Carraro D.M."/>
            <person name="Carrer H."/>
            <person name="Colauto N.B."/>
            <person name="Colombo C."/>
            <person name="Costa F.F."/>
            <person name="Costa M.C.R."/>
            <person name="Costa-Neto C.M."/>
            <person name="Coutinho L.L."/>
            <person name="Cristofani M."/>
            <person name="Dias-Neto E."/>
            <person name="Docena C."/>
            <person name="El-Dorry H."/>
            <person name="Facincani A.P."/>
            <person name="Ferreira A.J.S."/>
            <person name="Ferreira V.C.A."/>
            <person name="Ferro J.A."/>
            <person name="Fraga J.S."/>
            <person name="Franca S.C."/>
            <person name="Franco M.C."/>
            <person name="Frohme M."/>
            <person name="Furlan L.R."/>
            <person name="Garnier M."/>
            <person name="Goldman G.H."/>
            <person name="Goldman M.H.S."/>
            <person name="Gomes S.L."/>
            <person name="Gruber A."/>
            <person name="Ho P.L."/>
            <person name="Hoheisel J.D."/>
            <person name="Junqueira M.L."/>
            <person name="Kemper E.L."/>
            <person name="Kitajima J.P."/>
            <person name="Krieger J.E."/>
            <person name="Kuramae E.E."/>
            <person name="Laigret F."/>
            <person name="Lambais M.R."/>
            <person name="Leite L.C.C."/>
            <person name="Lemos E.G.M."/>
            <person name="Lemos M.V.F."/>
            <person name="Lopes S.A."/>
            <person name="Lopes C.R."/>
            <person name="Machado J.A."/>
            <person name="Machado M.A."/>
            <person name="Madeira A.M.B.N."/>
            <person name="Madeira H.M.F."/>
            <person name="Marino C.L."/>
            <person name="Marques M.V."/>
            <person name="Martins E.A.L."/>
            <person name="Martins E.M.F."/>
            <person name="Matsukuma A.Y."/>
            <person name="Menck C.F.M."/>
            <person name="Miracca E.C."/>
            <person name="Miyaki C.Y."/>
            <person name="Monteiro-Vitorello C.B."/>
            <person name="Moon D.H."/>
            <person name="Nagai M.A."/>
            <person name="Nascimento A.L.T.O."/>
            <person name="Netto L.E.S."/>
            <person name="Nhani A. Jr."/>
            <person name="Nobrega F.G."/>
            <person name="Nunes L.R."/>
            <person name="Oliveira M.A."/>
            <person name="de Oliveira M.C."/>
            <person name="de Oliveira R.C."/>
            <person name="Palmieri D.A."/>
            <person name="Paris A."/>
            <person name="Peixoto B.R."/>
            <person name="Pereira G.A.G."/>
            <person name="Pereira H.A. Jr."/>
            <person name="Pesquero J.B."/>
            <person name="Quaggio R.B."/>
            <person name="Roberto P.G."/>
            <person name="Rodrigues V."/>
            <person name="de Rosa A.J.M."/>
            <person name="de Rosa V.E. Jr."/>
            <person name="de Sa R.G."/>
            <person name="Santelli R.V."/>
            <person name="Sawasaki H.E."/>
            <person name="da Silva A.C.R."/>
            <person name="da Silva A.M."/>
            <person name="da Silva F.R."/>
            <person name="Silva W.A. Jr."/>
            <person name="da Silveira J.F."/>
            <person name="Silvestri M.L.Z."/>
            <person name="Siqueira W.J."/>
            <person name="de Souza A.A."/>
            <person name="de Souza A.P."/>
            <person name="Terenzi M.F."/>
            <person name="Truffi D."/>
            <person name="Tsai S.M."/>
            <person name="Tsuhako M.H."/>
            <person name="Vallada H."/>
            <person name="Van Sluys M.A."/>
            <person name="Verjovski-Almeida S."/>
            <person name="Vettore A.L."/>
            <person name="Zago M.A."/>
            <person name="Zatz M."/>
            <person name="Meidanis J."/>
            <person name="Setubal J.C."/>
        </authorList>
    </citation>
    <scope>NUCLEOTIDE SEQUENCE [LARGE SCALE GENOMIC DNA]</scope>
    <source>
        <strain>9a5c</strain>
    </source>
</reference>
<evidence type="ECO:0000250" key="1"/>
<evidence type="ECO:0000255" key="2"/>
<evidence type="ECO:0000305" key="3"/>
<gene>
    <name type="primary">rmuC</name>
    <name type="ordered locus">XF_0413</name>
</gene>
<organism>
    <name type="scientific">Xylella fastidiosa (strain 9a5c)</name>
    <dbReference type="NCBI Taxonomy" id="160492"/>
    <lineage>
        <taxon>Bacteria</taxon>
        <taxon>Pseudomonadati</taxon>
        <taxon>Pseudomonadota</taxon>
        <taxon>Gammaproteobacteria</taxon>
        <taxon>Lysobacterales</taxon>
        <taxon>Lysobacteraceae</taxon>
        <taxon>Xylella</taxon>
    </lineage>
</organism>
<keyword id="KW-0175">Coiled coil</keyword>
<keyword id="KW-0233">DNA recombination</keyword>
<name>RMUC_XYLFA</name>
<sequence>MQPDFLILGCLLCIVLVLQILALLRRSDHTALDHVLREEHRVGRAELREQLETLERQQEVRLASFARSLTDLVARIDQRLDQLTASLGEDARKGRQEASEGQQRFADALGQRLTELTQRNAQSINEMRTTLEQQLHVLRADNAQQLEQIRAIVDEKLQTTLNTRLDSSFKLVSERLEQVQRGLGEMQQLATGVGDLKRVLTHVKSRGTWGEVQLDNILDQTLTQEQYARGVRVCPDASEIVDFAVRLPGRGQYEAPVWLPIDVKCPKEDYERLLDAQEQADQELVRTMGVQLERAIKIQAKSIRDKYIVPPHTTDFAVMFLPTEGLYAETIRRPGLADVLQREYRVVVAGPTTVTALLNSLQMGFRTLAIEQRSSEVWSLLGAVKSEFGKFAGILEKAEKQINTVGKSLGEAGRKTRTIERRLRGVESLSQEQTQVLLDGLDVDAAESDVDSDASF</sequence>
<accession>Q9PG89</accession>
<dbReference type="EMBL" id="AE003849">
    <property type="protein sequence ID" value="AAF83223.1"/>
    <property type="molecule type" value="Genomic_DNA"/>
</dbReference>
<dbReference type="PIR" id="D82810">
    <property type="entry name" value="D82810"/>
</dbReference>
<dbReference type="RefSeq" id="WP_010892943.1">
    <property type="nucleotide sequence ID" value="NC_002488.3"/>
</dbReference>
<dbReference type="SMR" id="Q9PG89"/>
<dbReference type="STRING" id="160492.XF_0413"/>
<dbReference type="KEGG" id="xfa:XF_0413"/>
<dbReference type="eggNOG" id="COG1322">
    <property type="taxonomic scope" value="Bacteria"/>
</dbReference>
<dbReference type="HOGENOM" id="CLU_020365_1_1_6"/>
<dbReference type="Proteomes" id="UP000000812">
    <property type="component" value="Chromosome"/>
</dbReference>
<dbReference type="GO" id="GO:0006310">
    <property type="term" value="P:DNA recombination"/>
    <property type="evidence" value="ECO:0007669"/>
    <property type="project" value="UniProtKB-KW"/>
</dbReference>
<dbReference type="Gene3D" id="1.20.120.20">
    <property type="entry name" value="Apolipoprotein"/>
    <property type="match status" value="1"/>
</dbReference>
<dbReference type="InterPro" id="IPR003798">
    <property type="entry name" value="DNA_recombination_RmuC"/>
</dbReference>
<dbReference type="PANTHER" id="PTHR30563">
    <property type="entry name" value="DNA RECOMBINATION PROTEIN RMUC"/>
    <property type="match status" value="1"/>
</dbReference>
<dbReference type="PANTHER" id="PTHR30563:SF0">
    <property type="entry name" value="DNA RECOMBINATION PROTEIN RMUC"/>
    <property type="match status" value="1"/>
</dbReference>
<dbReference type="Pfam" id="PF02646">
    <property type="entry name" value="RmuC"/>
    <property type="match status" value="1"/>
</dbReference>
<dbReference type="SUPFAM" id="SSF58113">
    <property type="entry name" value="Apolipoprotein A-I"/>
    <property type="match status" value="1"/>
</dbReference>
<protein>
    <recommendedName>
        <fullName>DNA recombination protein RmuC homolog</fullName>
    </recommendedName>
</protein>
<feature type="chain" id="PRO_0000202052" description="DNA recombination protein RmuC homolog">
    <location>
        <begin position="1"/>
        <end position="456"/>
    </location>
</feature>
<feature type="coiled-coil region" evidence="2">
    <location>
        <begin position="36"/>
        <end position="60"/>
    </location>
</feature>
<feature type="coiled-coil region" evidence="2">
    <location>
        <begin position="106"/>
        <end position="158"/>
    </location>
</feature>
<proteinExistence type="inferred from homology"/>